<name>CLPS_ZYMMO</name>
<keyword id="KW-1185">Reference proteome</keyword>
<comment type="function">
    <text evidence="1">Involved in the modulation of the specificity of the ClpAP-mediated ATP-dependent protein degradation.</text>
</comment>
<comment type="subunit">
    <text evidence="1">Binds to the N-terminal domain of the chaperone ClpA.</text>
</comment>
<comment type="similarity">
    <text evidence="1">Belongs to the ClpS family.</text>
</comment>
<protein>
    <recommendedName>
        <fullName evidence="1">ATP-dependent Clp protease adapter protein ClpS</fullName>
    </recommendedName>
</protein>
<organism>
    <name type="scientific">Zymomonas mobilis subsp. mobilis (strain ATCC 31821 / ZM4 / CP4)</name>
    <dbReference type="NCBI Taxonomy" id="264203"/>
    <lineage>
        <taxon>Bacteria</taxon>
        <taxon>Pseudomonadati</taxon>
        <taxon>Pseudomonadota</taxon>
        <taxon>Alphaproteobacteria</taxon>
        <taxon>Sphingomonadales</taxon>
        <taxon>Zymomonadaceae</taxon>
        <taxon>Zymomonas</taxon>
    </lineage>
</organism>
<sequence length="107" mass="12297">MSGDKDFDKDSDVTVITRTTPQTKKPQPYKVLMLNDDYTPMEFVVLCLQRFFRMGIEDATKVMLQVHQRGVGICGVFTYEVAETKVNQVVDFARQHQHPLQCTLEKA</sequence>
<accession>Q5NLR1</accession>
<gene>
    <name evidence="1" type="primary">clpS</name>
    <name type="ordered locus">ZMO1725</name>
</gene>
<reference key="1">
    <citation type="journal article" date="2005" name="Nat. Biotechnol.">
        <title>The genome sequence of the ethanologenic bacterium Zymomonas mobilis ZM4.</title>
        <authorList>
            <person name="Seo J.-S."/>
            <person name="Chong H."/>
            <person name="Park H.S."/>
            <person name="Yoon K.-O."/>
            <person name="Jung C."/>
            <person name="Kim J.J."/>
            <person name="Hong J.H."/>
            <person name="Kim H."/>
            <person name="Kim J.-H."/>
            <person name="Kil J.-I."/>
            <person name="Park C.J."/>
            <person name="Oh H.-M."/>
            <person name="Lee J.-S."/>
            <person name="Jin S.-J."/>
            <person name="Um H.-W."/>
            <person name="Lee H.-J."/>
            <person name="Oh S.-J."/>
            <person name="Kim J.Y."/>
            <person name="Kang H.L."/>
            <person name="Lee S.Y."/>
            <person name="Lee K.J."/>
            <person name="Kang H.S."/>
        </authorList>
    </citation>
    <scope>NUCLEOTIDE SEQUENCE [LARGE SCALE GENOMIC DNA]</scope>
    <source>
        <strain>ATCC 31821 / ZM4 / CP4</strain>
    </source>
</reference>
<evidence type="ECO:0000255" key="1">
    <source>
        <dbReference type="HAMAP-Rule" id="MF_00302"/>
    </source>
</evidence>
<evidence type="ECO:0000256" key="2">
    <source>
        <dbReference type="SAM" id="MobiDB-lite"/>
    </source>
</evidence>
<feature type="chain" id="PRO_0000215769" description="ATP-dependent Clp protease adapter protein ClpS">
    <location>
        <begin position="1"/>
        <end position="107"/>
    </location>
</feature>
<feature type="region of interest" description="Disordered" evidence="2">
    <location>
        <begin position="1"/>
        <end position="21"/>
    </location>
</feature>
<feature type="compositionally biased region" description="Basic and acidic residues" evidence="2">
    <location>
        <begin position="1"/>
        <end position="12"/>
    </location>
</feature>
<proteinExistence type="inferred from homology"/>
<dbReference type="EMBL" id="AE008692">
    <property type="protein sequence ID" value="AAV90349.2"/>
    <property type="molecule type" value="Genomic_DNA"/>
</dbReference>
<dbReference type="RefSeq" id="WP_011241472.1">
    <property type="nucleotide sequence ID" value="NZ_CP035711.1"/>
</dbReference>
<dbReference type="SMR" id="Q5NLR1"/>
<dbReference type="STRING" id="264203.ZMO1725"/>
<dbReference type="GeneID" id="79904947"/>
<dbReference type="KEGG" id="zmo:ZMO1725"/>
<dbReference type="eggNOG" id="COG2127">
    <property type="taxonomic scope" value="Bacteria"/>
</dbReference>
<dbReference type="HOGENOM" id="CLU_134358_0_0_5"/>
<dbReference type="Proteomes" id="UP000001173">
    <property type="component" value="Chromosome"/>
</dbReference>
<dbReference type="GO" id="GO:0030163">
    <property type="term" value="P:protein catabolic process"/>
    <property type="evidence" value="ECO:0007669"/>
    <property type="project" value="InterPro"/>
</dbReference>
<dbReference type="GO" id="GO:0006508">
    <property type="term" value="P:proteolysis"/>
    <property type="evidence" value="ECO:0007669"/>
    <property type="project" value="UniProtKB-UniRule"/>
</dbReference>
<dbReference type="FunFam" id="3.30.1390.10:FF:000002">
    <property type="entry name" value="ATP-dependent Clp protease adapter protein ClpS"/>
    <property type="match status" value="1"/>
</dbReference>
<dbReference type="Gene3D" id="3.30.1390.10">
    <property type="match status" value="1"/>
</dbReference>
<dbReference type="HAMAP" id="MF_00302">
    <property type="entry name" value="ClpS"/>
    <property type="match status" value="1"/>
</dbReference>
<dbReference type="InterPro" id="IPR022935">
    <property type="entry name" value="ClpS"/>
</dbReference>
<dbReference type="InterPro" id="IPR003769">
    <property type="entry name" value="ClpS_core"/>
</dbReference>
<dbReference type="InterPro" id="IPR014719">
    <property type="entry name" value="Ribosomal_bL12_C/ClpS-like"/>
</dbReference>
<dbReference type="NCBIfam" id="NF000669">
    <property type="entry name" value="PRK00033.1-2"/>
    <property type="match status" value="1"/>
</dbReference>
<dbReference type="NCBIfam" id="NF000672">
    <property type="entry name" value="PRK00033.1-5"/>
    <property type="match status" value="1"/>
</dbReference>
<dbReference type="PANTHER" id="PTHR33473:SF19">
    <property type="entry name" value="ATP-DEPENDENT CLP PROTEASE ADAPTER PROTEIN CLPS"/>
    <property type="match status" value="1"/>
</dbReference>
<dbReference type="PANTHER" id="PTHR33473">
    <property type="entry name" value="ATP-DEPENDENT CLP PROTEASE ADAPTER PROTEIN CLPS1, CHLOROPLASTIC"/>
    <property type="match status" value="1"/>
</dbReference>
<dbReference type="Pfam" id="PF02617">
    <property type="entry name" value="ClpS"/>
    <property type="match status" value="1"/>
</dbReference>
<dbReference type="SUPFAM" id="SSF54736">
    <property type="entry name" value="ClpS-like"/>
    <property type="match status" value="1"/>
</dbReference>